<organism>
    <name type="scientific">Gallus gallus</name>
    <name type="common">Chicken</name>
    <dbReference type="NCBI Taxonomy" id="9031"/>
    <lineage>
        <taxon>Eukaryota</taxon>
        <taxon>Metazoa</taxon>
        <taxon>Chordata</taxon>
        <taxon>Craniata</taxon>
        <taxon>Vertebrata</taxon>
        <taxon>Euteleostomi</taxon>
        <taxon>Archelosauria</taxon>
        <taxon>Archosauria</taxon>
        <taxon>Dinosauria</taxon>
        <taxon>Saurischia</taxon>
        <taxon>Theropoda</taxon>
        <taxon>Coelurosauria</taxon>
        <taxon>Aves</taxon>
        <taxon>Neognathae</taxon>
        <taxon>Galloanserae</taxon>
        <taxon>Galliformes</taxon>
        <taxon>Phasianidae</taxon>
        <taxon>Phasianinae</taxon>
        <taxon>Gallus</taxon>
    </lineage>
</organism>
<dbReference type="EMBL" id="Y14769">
    <property type="protein sequence ID" value="CAB37358.1"/>
    <property type="molecule type" value="mRNA"/>
</dbReference>
<dbReference type="EMBL" id="Y14769">
    <property type="protein sequence ID" value="CAB37359.1"/>
    <property type="molecule type" value="mRNA"/>
</dbReference>
<dbReference type="EMBL" id="Y14769">
    <property type="protein sequence ID" value="CAB37360.1"/>
    <property type="molecule type" value="mRNA"/>
</dbReference>
<dbReference type="SMR" id="Q9YGL6"/>
<dbReference type="FunCoup" id="Q9YGL6">
    <property type="interactions" value="750"/>
</dbReference>
<dbReference type="STRING" id="9031.ENSGALP00000059506"/>
<dbReference type="PaxDb" id="9031-ENSGALP00000002858"/>
<dbReference type="VEuPathDB" id="HostDB:geneid_101750199"/>
<dbReference type="eggNOG" id="ENOG502QQ2W">
    <property type="taxonomic scope" value="Eukaryota"/>
</dbReference>
<dbReference type="InParanoid" id="Q9YGL6"/>
<dbReference type="OrthoDB" id="9934905at2759"/>
<dbReference type="PhylomeDB" id="Q9YGL6"/>
<dbReference type="Proteomes" id="UP000000539">
    <property type="component" value="Unassembled WGS sequence"/>
</dbReference>
<dbReference type="GO" id="GO:0016327">
    <property type="term" value="C:apicolateral plasma membrane"/>
    <property type="evidence" value="ECO:0007669"/>
    <property type="project" value="UniProtKB-SubCell"/>
</dbReference>
<dbReference type="GO" id="GO:0030424">
    <property type="term" value="C:axon"/>
    <property type="evidence" value="ECO:0007669"/>
    <property type="project" value="UniProtKB-SubCell"/>
</dbReference>
<dbReference type="GO" id="GO:0016323">
    <property type="term" value="C:basolateral plasma membrane"/>
    <property type="evidence" value="ECO:0007669"/>
    <property type="project" value="UniProtKB-SubCell"/>
</dbReference>
<dbReference type="GO" id="GO:0005737">
    <property type="term" value="C:cytoplasm"/>
    <property type="evidence" value="ECO:0000250"/>
    <property type="project" value="AgBase"/>
</dbReference>
<dbReference type="GO" id="GO:0043197">
    <property type="term" value="C:dendritic spine"/>
    <property type="evidence" value="ECO:0007669"/>
    <property type="project" value="UniProtKB-SubCell"/>
</dbReference>
<dbReference type="GO" id="GO:0030175">
    <property type="term" value="C:filopodium"/>
    <property type="evidence" value="ECO:0000250"/>
    <property type="project" value="AgBase"/>
</dbReference>
<dbReference type="GO" id="GO:0031527">
    <property type="term" value="C:filopodium membrane"/>
    <property type="evidence" value="ECO:0007669"/>
    <property type="project" value="UniProtKB-SubCell"/>
</dbReference>
<dbReference type="GO" id="GO:0005622">
    <property type="term" value="C:intracellular anatomical structure"/>
    <property type="evidence" value="ECO:0000314"/>
    <property type="project" value="AgBase"/>
</dbReference>
<dbReference type="GO" id="GO:0044306">
    <property type="term" value="C:neuron projection terminus"/>
    <property type="evidence" value="ECO:0000314"/>
    <property type="project" value="AgBase"/>
</dbReference>
<dbReference type="GO" id="GO:0044309">
    <property type="term" value="C:neuron spine"/>
    <property type="evidence" value="ECO:0000250"/>
    <property type="project" value="AgBase"/>
</dbReference>
<dbReference type="GO" id="GO:0005886">
    <property type="term" value="C:plasma membrane"/>
    <property type="evidence" value="ECO:0000314"/>
    <property type="project" value="UniProtKB"/>
</dbReference>
<dbReference type="GO" id="GO:0098794">
    <property type="term" value="C:postsynapse"/>
    <property type="evidence" value="ECO:0000318"/>
    <property type="project" value="GO_Central"/>
</dbReference>
<dbReference type="GO" id="GO:0014069">
    <property type="term" value="C:postsynaptic density"/>
    <property type="evidence" value="ECO:0000250"/>
    <property type="project" value="AgBase"/>
</dbReference>
<dbReference type="GO" id="GO:0097060">
    <property type="term" value="C:synaptic membrane"/>
    <property type="evidence" value="ECO:0000314"/>
    <property type="project" value="AgBase"/>
</dbReference>
<dbReference type="GO" id="GO:0031750">
    <property type="term" value="F:D3 dopamine receptor binding"/>
    <property type="evidence" value="ECO:0000250"/>
    <property type="project" value="AgBase"/>
</dbReference>
<dbReference type="GO" id="GO:0007193">
    <property type="term" value="P:adenylate cyclase-inhibiting G protein-coupled receptor signaling pathway"/>
    <property type="evidence" value="ECO:0000318"/>
    <property type="project" value="GO_Central"/>
</dbReference>
<dbReference type="GO" id="GO:0071257">
    <property type="term" value="P:cellular response to electrical stimulus"/>
    <property type="evidence" value="ECO:0000250"/>
    <property type="project" value="AgBase"/>
</dbReference>
<dbReference type="GO" id="GO:0007010">
    <property type="term" value="P:cytoskeleton organization"/>
    <property type="evidence" value="ECO:0000250"/>
    <property type="project" value="AgBase"/>
</dbReference>
<dbReference type="GO" id="GO:0007194">
    <property type="term" value="P:negative regulation of adenylate cyclase activity"/>
    <property type="evidence" value="ECO:0000250"/>
    <property type="project" value="AgBase"/>
</dbReference>
<dbReference type="GO" id="GO:0060999">
    <property type="term" value="P:positive regulation of dendritic spine development"/>
    <property type="evidence" value="ECO:0000250"/>
    <property type="project" value="AgBase"/>
</dbReference>
<dbReference type="GO" id="GO:0051491">
    <property type="term" value="P:positive regulation of filopodium assembly"/>
    <property type="evidence" value="ECO:0000250"/>
    <property type="project" value="AgBase"/>
</dbReference>
<dbReference type="GO" id="GO:0008104">
    <property type="term" value="P:protein localization"/>
    <property type="evidence" value="ECO:0000250"/>
    <property type="project" value="AgBase"/>
</dbReference>
<dbReference type="GO" id="GO:0072659">
    <property type="term" value="P:protein localization to plasma membrane"/>
    <property type="evidence" value="ECO:0000250"/>
    <property type="project" value="AgBase"/>
</dbReference>
<dbReference type="GO" id="GO:0008360">
    <property type="term" value="P:regulation of cell shape"/>
    <property type="evidence" value="ECO:0000250"/>
    <property type="project" value="AgBase"/>
</dbReference>
<dbReference type="GO" id="GO:0060074">
    <property type="term" value="P:synapse maturation"/>
    <property type="evidence" value="ECO:0000250"/>
    <property type="project" value="AgBase"/>
</dbReference>
<dbReference type="InterPro" id="IPR004965">
    <property type="entry name" value="Paralemmin"/>
</dbReference>
<dbReference type="PANTHER" id="PTHR10498:SF6">
    <property type="entry name" value="PARALEMMIN-1"/>
    <property type="match status" value="1"/>
</dbReference>
<dbReference type="PANTHER" id="PTHR10498">
    <property type="entry name" value="PARALEMMIN-RELATED"/>
    <property type="match status" value="1"/>
</dbReference>
<dbReference type="Pfam" id="PF03285">
    <property type="entry name" value="Paralemmin"/>
    <property type="match status" value="1"/>
</dbReference>
<gene>
    <name type="primary">PALM</name>
</gene>
<feature type="chain" id="PRO_0000058217" description="Paralemmin-1">
    <location>
        <begin position="1"/>
        <end position="383"/>
    </location>
</feature>
<feature type="propeptide" id="PRO_0000396692" description="Removed in mature form" evidence="2">
    <location>
        <begin position="384"/>
        <end position="386"/>
    </location>
</feature>
<feature type="region of interest" description="Disordered" evidence="3">
    <location>
        <begin position="21"/>
        <end position="40"/>
    </location>
</feature>
<feature type="region of interest" description="Disordered" evidence="3">
    <location>
        <begin position="51"/>
        <end position="149"/>
    </location>
</feature>
<feature type="region of interest" description="Disordered" evidence="3">
    <location>
        <begin position="240"/>
        <end position="290"/>
    </location>
</feature>
<feature type="region of interest" description="Disordered" evidence="3">
    <location>
        <begin position="321"/>
        <end position="378"/>
    </location>
</feature>
<feature type="coiled-coil region" evidence="2">
    <location>
        <begin position="4"/>
        <end position="115"/>
    </location>
</feature>
<feature type="compositionally biased region" description="Basic and acidic residues" evidence="3">
    <location>
        <begin position="24"/>
        <end position="40"/>
    </location>
</feature>
<feature type="compositionally biased region" description="Basic and acidic residues" evidence="3">
    <location>
        <begin position="68"/>
        <end position="95"/>
    </location>
</feature>
<feature type="compositionally biased region" description="Low complexity" evidence="3">
    <location>
        <begin position="97"/>
        <end position="116"/>
    </location>
</feature>
<feature type="compositionally biased region" description="Basic and acidic residues" evidence="3">
    <location>
        <begin position="259"/>
        <end position="282"/>
    </location>
</feature>
<feature type="compositionally biased region" description="Basic and acidic residues" evidence="3">
    <location>
        <begin position="322"/>
        <end position="334"/>
    </location>
</feature>
<feature type="compositionally biased region" description="Basic and acidic residues" evidence="3">
    <location>
        <begin position="365"/>
        <end position="377"/>
    </location>
</feature>
<feature type="modified residue" description="Cysteine methyl ester" evidence="2">
    <location>
        <position position="383"/>
    </location>
</feature>
<feature type="lipid moiety-binding region" description="S-palmitoyl cysteine" evidence="2">
    <location>
        <position position="380"/>
    </location>
</feature>
<feature type="lipid moiety-binding region" description="S-palmitoyl cysteine" evidence="2">
    <location>
        <position position="382"/>
    </location>
</feature>
<feature type="lipid moiety-binding region" description="S-farnesyl cysteine" evidence="2">
    <location>
        <position position="383"/>
    </location>
</feature>
<feature type="splice variant" id="VSP_003920" description="In isoform 2." evidence="6">
    <location>
        <begin position="138"/>
        <end position="202"/>
    </location>
</feature>
<feature type="splice variant" id="VSP_003921" description="In isoform 3." evidence="6">
    <location>
        <begin position="159"/>
        <end position="202"/>
    </location>
</feature>
<evidence type="ECO:0000250" key="1"/>
<evidence type="ECO:0000255" key="2"/>
<evidence type="ECO:0000256" key="3">
    <source>
        <dbReference type="SAM" id="MobiDB-lite"/>
    </source>
</evidence>
<evidence type="ECO:0000269" key="4">
    <source>
    </source>
</evidence>
<evidence type="ECO:0000269" key="5">
    <source>
    </source>
</evidence>
<evidence type="ECO:0000303" key="6">
    <source>
    </source>
</evidence>
<evidence type="ECO:0000305" key="7"/>
<name>PALM_CHICK</name>
<protein>
    <recommendedName>
        <fullName>Paralemmin-1</fullName>
    </recommendedName>
    <alternativeName>
        <fullName>Paralemmin</fullName>
    </alternativeName>
</protein>
<accession>Q9YGL6</accession>
<accession>Q9YGL4</accession>
<accession>Q9YGL5</accession>
<keyword id="KW-0025">Alternative splicing</keyword>
<keyword id="KW-1003">Cell membrane</keyword>
<keyword id="KW-0966">Cell projection</keyword>
<keyword id="KW-0133">Cell shape</keyword>
<keyword id="KW-0175">Coiled coil</keyword>
<keyword id="KW-0449">Lipoprotein</keyword>
<keyword id="KW-0472">Membrane</keyword>
<keyword id="KW-0488">Methylation</keyword>
<keyword id="KW-0564">Palmitate</keyword>
<keyword id="KW-0597">Phosphoprotein</keyword>
<keyword id="KW-0636">Prenylation</keyword>
<keyword id="KW-1185">Reference proteome</keyword>
<keyword id="KW-0770">Synapse</keyword>
<sequence>MEAVEANTLQQERLQAIAEKRKRQTEIENKRRQLEDDRRQLQHLKSKALRERWLLEGAPSSASEEDEAMKKQMQEDEVKTKELEETIQRLERELESLENSSSVTSTKENLAEAAAPAKEEKKENIPSVQKSPLGTAIAEKKVSSSPMKAVQGTDMMKAAMYSVEITVEKDRVTGETKVLSSTTLLPQNHCVQGIKVYEDELKVVHAVSAEDGALQNGAQPLSSSEVDELLHKADEVTLGEATASGDAPGSATSSQKATPRREITGLQAKPRENSTEGAEPSREQPVTMIFMGYQNVEDENETKKVLGLEGTIKAELVVIEDAESKAEPEGKDHAPPNGTALEPAAAPLQGDEVPGGQKPGTNATEAKEAEPDMDAKKQRCKCCTVM</sequence>
<proteinExistence type="evidence at protein level"/>
<comment type="function">
    <text evidence="1">Involved in plasma membrane dynamics and cell process formation. Isoform 1 and isoform 2 are necessary for axonal and dendritic filopodia induction, for dendritic spine maturation and synapse formation in a palmitoylation-dependent manner (By similarity).</text>
</comment>
<comment type="subunit">
    <text evidence="1">Interacts with dopamine receptor DRD3.</text>
</comment>
<comment type="subcellular location">
    <subcellularLocation>
        <location>Cell membrane</location>
        <topology>Lipid-anchor</topology>
        <orientation>Cytoplasmic side</orientation>
    </subcellularLocation>
    <subcellularLocation>
        <location evidence="1">Cell projection</location>
        <location evidence="1">Filopodium membrane</location>
        <topology evidence="1">Lipid-anchor</topology>
    </subcellularLocation>
    <subcellularLocation>
        <location evidence="1">Cell projection</location>
        <location evidence="1">Axon</location>
    </subcellularLocation>
    <subcellularLocation>
        <location evidence="1">Cell projection</location>
        <location evidence="1">Dendrite</location>
    </subcellularLocation>
    <subcellularLocation>
        <location evidence="1">Cell projection</location>
        <location evidence="1">Dendritic spine</location>
    </subcellularLocation>
    <subcellularLocation>
        <location evidence="1">Basolateral cell membrane</location>
        <topology evidence="1">Lipid-anchor</topology>
    </subcellularLocation>
    <subcellularLocation>
        <location evidence="1">Apicolateral cell membrane</location>
        <topology evidence="1">Lipid-anchor</topology>
    </subcellularLocation>
</comment>
<comment type="alternative products">
    <event type="alternative splicing"/>
    <isoform>
        <id>Q9YGL6-1</id>
        <name>1</name>
        <sequence type="displayed"/>
    </isoform>
    <isoform>
        <id>Q9YGL6-2</id>
        <name>2</name>
        <sequence type="described" ref="VSP_003920"/>
    </isoform>
    <isoform>
        <id>Q9YGL6-3</id>
        <name>3</name>
        <sequence type="described" ref="VSP_003921"/>
    </isoform>
</comment>
<comment type="tissue specificity">
    <text evidence="4 5">Expressed in the lens (at protein level). Highly expressed in forebrain and cerebellum with lower expression in adrenal gland and heart. Expression weak or undetectable in other tissues.</text>
</comment>
<comment type="PTM">
    <text evidence="1">Phosphorylated.</text>
</comment>
<comment type="similarity">
    <text evidence="7">Belongs to the paralemmin family.</text>
</comment>
<reference key="1">
    <citation type="journal article" date="1998" name="J. Cell Biol.">
        <title>Paralemmin, a prenyl-palmitoyl-anchored phosphoprotein abundant in neurons and implicated in plasma membrane dynamics and cell process formation.</title>
        <authorList>
            <person name="Kutzleb C."/>
            <person name="Sanders G."/>
            <person name="Yamamoto R."/>
            <person name="Wang X."/>
            <person name="Lichte B."/>
            <person name="Petrasch-Parwez E."/>
            <person name="Kilimann M.W."/>
        </authorList>
    </citation>
    <scope>NUCLEOTIDE SEQUENCE [MRNA] (ISOFORMS 1; 2 AND 3)</scope>
    <scope>SUBCELLULAR LOCATION</scope>
    <scope>TISSUE SPECIFICITY</scope>
    <source>
        <tissue>Brain</tissue>
    </source>
</reference>
<reference key="2">
    <citation type="journal article" date="2003" name="J. Cell. Biochem.">
        <title>Paralemmin of the lens.</title>
        <authorList>
            <person name="Bagchi M."/>
            <person name="Katar M."/>
            <person name="Lo W.K."/>
            <person name="Maisel H."/>
        </authorList>
    </citation>
    <scope>SUBCELLULAR LOCATION</scope>
    <scope>TISSUE SPECIFICITY</scope>
    <scope>IDENTIFICATION BY MASS SPECTROMETRY</scope>
</reference>